<evidence type="ECO:0000255" key="1">
    <source>
        <dbReference type="PROSITE-ProRule" id="PRU00714"/>
    </source>
</evidence>
<evidence type="ECO:0000256" key="2">
    <source>
        <dbReference type="SAM" id="MobiDB-lite"/>
    </source>
</evidence>
<evidence type="ECO:0000269" key="3">
    <source>
    </source>
</evidence>
<evidence type="ECO:0000269" key="4">
    <source>
    </source>
</evidence>
<evidence type="ECO:0000269" key="5">
    <source>
    </source>
</evidence>
<evidence type="ECO:0000269" key="6">
    <source>
    </source>
</evidence>
<evidence type="ECO:0000269" key="7">
    <source>
    </source>
</evidence>
<evidence type="ECO:0000269" key="8">
    <source>
    </source>
</evidence>
<evidence type="ECO:0000269" key="9">
    <source>
    </source>
</evidence>
<evidence type="ECO:0000303" key="10">
    <source>
    </source>
</evidence>
<evidence type="ECO:0000305" key="11"/>
<evidence type="ECO:0000312" key="12">
    <source>
        <dbReference type="EMBL" id="BAD35467.1"/>
    </source>
</evidence>
<evidence type="ECO:0000312" key="13">
    <source>
        <dbReference type="EMBL" id="BAF19927.1"/>
    </source>
</evidence>
<evidence type="ECO:0000312" key="14">
    <source>
        <dbReference type="EMBL" id="EAZ37570.1"/>
    </source>
</evidence>
<evidence type="ECO:0007829" key="15">
    <source>
        <dbReference type="PDB" id="7E40"/>
    </source>
</evidence>
<accession>Q69XJ0</accession>
<accession>A0A0P0WYU6</accession>
<proteinExistence type="evidence at protein level"/>
<gene>
    <name evidence="10" type="primary">SPX1</name>
    <name evidence="13" type="ordered locus">Os06g0603600</name>
    <name evidence="11" type="ordered locus">LOC_Os06g40120</name>
    <name evidence="14" type="ORF">OsJ_21901</name>
    <name evidence="12" type="ORF">P0486H12.37</name>
</gene>
<sequence>MKFGKSLSSQIVETLPEWRDKFLSYKDLKKRLKLIGGGGGGEERQAKRARVAADGGEEEAAAAAMTPEEAGFMRLLEAELDKFNSFFVEKEEEYIIRQKELQDRVARAAGRESKEELMRVRKEIVDFHGEMVLLENYSALNYTGLVKILKKYDKRTGALIRLPFIQKVLQQPFFTTDLLYKLVKQCEAMLDQLLPSNELSVSSEDGRGDSTNEDKPSNPSSSLVNGGTIPELDEIEYMESMYMKGTVAALRSLKEIRSGSSTVSAFSLPPLQGDSSPEEQQELWNKIPVIEQAAK</sequence>
<comment type="function">
    <text evidence="3 5 6 7 8">Involved in plant adaptation to phosphate (Pi) starvation (PubMed:19000161). Inhibits PHR2 DNA-binding activity via a Pi-dependent protein interaction (PubMed:25271318). Suppresses the regulation on expression of PT2 by PHR2 and accumulation of shoot Pi (PubMed:20149131). Optimizes growth under phosphate-limited conditions through a negative feedback loop of the PSI (phosphate starvation-induced) signaling pathway (PubMed:19000161, PubMed:20149131). Regulates the expression of SPX2, SPX3 and SPX5 (PubMed:19566645). May be an important link between signal transduction pathways related to phosphate starvation and cold stress (PubMed:19000161). Together with SPX2, plays a negative role in the regulation of leaf inclination by preventing RLI1 transcription factor activity in Pi depleted conditions (PubMed:29610209).</text>
</comment>
<comment type="subunit">
    <text evidence="7 8 9">Interacts (via SPX domain) with PHR2 (via C-terminus) (PubMed:25271318, PubMed:35640569). Interacts with RLI1 in the nucleus to prevents its positive regulation of leaf inclination during phosphate (Pi) starvation (PubMed:29610209, PubMed:35640569).</text>
</comment>
<comment type="subcellular location">
    <subcellularLocation>
        <location evidence="5 7">Nucleus</location>
    </subcellularLocation>
</comment>
<comment type="tissue specificity">
    <text evidence="5 8">Predominantly expressed in roots and leaves (PubMed:19566645). Localized in leaves lamina joints (PubMed:29610209).</text>
</comment>
<comment type="induction">
    <text evidence="3 4 5 6 7 8">Up-regulated under phosphate (Pi) starvation in lamina joint cells (PubMed:19000161, PubMed:19566645, PubMed:29610209). Up-regulated during cold stress (PubMed:19508276). Under negative feedback regulation by PHO2 (PubMed:20149131). Up-regulated by the transcription factor PHR2 (PubMed:25271318).</text>
</comment>
<comment type="domain">
    <text evidence="7">The SPX domain is sufficient for inhibition of PHR2 binding to DNA.</text>
</comment>
<comment type="disruption phenotype">
    <text evidence="8">Slightly increased angles of leaf inclination due to longer lamina joint with greater lengths of both adaxial and abaxial sclerenchyma cells (PubMed:29610209). The double mutant spx1 spx2 has abnormally inclinated leaves (PubMed:29610209). Altered leaf inclination phenotypes of the rli1-1 single mutant are suppressed in the triple mutant spx1 spx2 rli1-1 (PubMed:29610209).</text>
</comment>
<comment type="miscellaneous">
    <text evidence="7">SPX1 and SPX2 have redundant functions in repressing the activity of PHR2.</text>
</comment>
<dbReference type="EMBL" id="AP003615">
    <property type="protein sequence ID" value="BAD35467.1"/>
    <property type="molecule type" value="Genomic_DNA"/>
</dbReference>
<dbReference type="EMBL" id="AP008212">
    <property type="protein sequence ID" value="BAF19927.1"/>
    <property type="molecule type" value="Genomic_DNA"/>
</dbReference>
<dbReference type="EMBL" id="AP014962">
    <property type="protein sequence ID" value="BAS98511.1"/>
    <property type="molecule type" value="Genomic_DNA"/>
</dbReference>
<dbReference type="EMBL" id="CM000143">
    <property type="protein sequence ID" value="EAZ37570.1"/>
    <property type="molecule type" value="Genomic_DNA"/>
</dbReference>
<dbReference type="EMBL" id="AK063544">
    <property type="protein sequence ID" value="BAG88759.1"/>
    <property type="molecule type" value="mRNA"/>
</dbReference>
<dbReference type="EMBL" id="AK072067">
    <property type="protein sequence ID" value="BAG92810.1"/>
    <property type="molecule type" value="mRNA"/>
</dbReference>
<dbReference type="RefSeq" id="XP_015644496.1">
    <property type="nucleotide sequence ID" value="XM_015789010.1"/>
</dbReference>
<dbReference type="PDB" id="7E40">
    <property type="method" value="X-ray"/>
    <property type="resolution" value="2.60 A"/>
    <property type="chains" value="B/D=1-198"/>
</dbReference>
<dbReference type="PDBsum" id="7E40"/>
<dbReference type="SMR" id="Q69XJ0"/>
<dbReference type="FunCoup" id="Q69XJ0">
    <property type="interactions" value="4"/>
</dbReference>
<dbReference type="STRING" id="39947.Q69XJ0"/>
<dbReference type="CarbonylDB" id="Q69XJ0"/>
<dbReference type="PaxDb" id="39947-Q69XJ0"/>
<dbReference type="EnsemblPlants" id="Os06t0603600-01">
    <property type="protein sequence ID" value="Os06t0603600-01"/>
    <property type="gene ID" value="Os06g0603600"/>
</dbReference>
<dbReference type="EnsemblPlants" id="Os06t0603600-02">
    <property type="protein sequence ID" value="Os06t0603600-02"/>
    <property type="gene ID" value="Os06g0603600"/>
</dbReference>
<dbReference type="Gramene" id="Os06t0603600-01">
    <property type="protein sequence ID" value="Os06t0603600-01"/>
    <property type="gene ID" value="Os06g0603600"/>
</dbReference>
<dbReference type="Gramene" id="Os06t0603600-02">
    <property type="protein sequence ID" value="Os06t0603600-02"/>
    <property type="gene ID" value="Os06g0603600"/>
</dbReference>
<dbReference type="KEGG" id="dosa:Os06g0603600"/>
<dbReference type="eggNOG" id="KOG1161">
    <property type="taxonomic scope" value="Eukaryota"/>
</dbReference>
<dbReference type="HOGENOM" id="CLU_057600_1_1_1"/>
<dbReference type="InParanoid" id="Q69XJ0"/>
<dbReference type="OMA" id="IEYMESS"/>
<dbReference type="OrthoDB" id="6493944at2759"/>
<dbReference type="Proteomes" id="UP000000763">
    <property type="component" value="Chromosome 6"/>
</dbReference>
<dbReference type="Proteomes" id="UP000007752">
    <property type="component" value="Chromosome 6"/>
</dbReference>
<dbReference type="Proteomes" id="UP000059680">
    <property type="component" value="Chromosome 6"/>
</dbReference>
<dbReference type="GO" id="GO:0005634">
    <property type="term" value="C:nucleus"/>
    <property type="evidence" value="ECO:0000314"/>
    <property type="project" value="UniProtKB"/>
</dbReference>
<dbReference type="GO" id="GO:0070417">
    <property type="term" value="P:cellular response to cold"/>
    <property type="evidence" value="ECO:0000270"/>
    <property type="project" value="UniProtKB"/>
</dbReference>
<dbReference type="GO" id="GO:0016036">
    <property type="term" value="P:cellular response to phosphate starvation"/>
    <property type="evidence" value="ECO:0000270"/>
    <property type="project" value="UniProtKB"/>
</dbReference>
<dbReference type="GO" id="GO:0051511">
    <property type="term" value="P:negative regulation of unidimensional cell growth"/>
    <property type="evidence" value="ECO:0000315"/>
    <property type="project" value="UniProtKB"/>
</dbReference>
<dbReference type="GO" id="GO:0080040">
    <property type="term" value="P:positive regulation of cellular response to phosphate starvation"/>
    <property type="evidence" value="ECO:0000315"/>
    <property type="project" value="UniProtKB"/>
</dbReference>
<dbReference type="GO" id="GO:2000024">
    <property type="term" value="P:regulation of leaf development"/>
    <property type="evidence" value="ECO:0000315"/>
    <property type="project" value="UniProtKB"/>
</dbReference>
<dbReference type="CDD" id="cd14481">
    <property type="entry name" value="SPX_AtSPX1_like"/>
    <property type="match status" value="1"/>
</dbReference>
<dbReference type="InterPro" id="IPR004331">
    <property type="entry name" value="SPX_dom"/>
</dbReference>
<dbReference type="InterPro" id="IPR031142">
    <property type="entry name" value="SPX_prot"/>
</dbReference>
<dbReference type="PANTHER" id="PTHR45978:SF5">
    <property type="entry name" value="SPX DOMAIN-CONTAINING PROTEIN 2"/>
    <property type="match status" value="1"/>
</dbReference>
<dbReference type="PANTHER" id="PTHR45978">
    <property type="entry name" value="SPX DOMAIN-CONTAINING PROTEIN 3"/>
    <property type="match status" value="1"/>
</dbReference>
<dbReference type="Pfam" id="PF03105">
    <property type="entry name" value="SPX"/>
    <property type="match status" value="2"/>
</dbReference>
<dbReference type="PROSITE" id="PS51382">
    <property type="entry name" value="SPX"/>
    <property type="match status" value="1"/>
</dbReference>
<reference key="1">
    <citation type="journal article" date="2005" name="Nature">
        <title>The map-based sequence of the rice genome.</title>
        <authorList>
            <consortium name="International rice genome sequencing project (IRGSP)"/>
        </authorList>
    </citation>
    <scope>NUCLEOTIDE SEQUENCE [LARGE SCALE GENOMIC DNA]</scope>
    <source>
        <strain>cv. Nipponbare</strain>
    </source>
</reference>
<reference key="2">
    <citation type="journal article" date="2008" name="Nucleic Acids Res.">
        <title>The rice annotation project database (RAP-DB): 2008 update.</title>
        <authorList>
            <consortium name="The rice annotation project (RAP)"/>
        </authorList>
    </citation>
    <scope>GENOME REANNOTATION</scope>
    <source>
        <strain>cv. Nipponbare</strain>
    </source>
</reference>
<reference key="3">
    <citation type="journal article" date="2013" name="Rice">
        <title>Improvement of the Oryza sativa Nipponbare reference genome using next generation sequence and optical map data.</title>
        <authorList>
            <person name="Kawahara Y."/>
            <person name="de la Bastide M."/>
            <person name="Hamilton J.P."/>
            <person name="Kanamori H."/>
            <person name="McCombie W.R."/>
            <person name="Ouyang S."/>
            <person name="Schwartz D.C."/>
            <person name="Tanaka T."/>
            <person name="Wu J."/>
            <person name="Zhou S."/>
            <person name="Childs K.L."/>
            <person name="Davidson R.M."/>
            <person name="Lin H."/>
            <person name="Quesada-Ocampo L."/>
            <person name="Vaillancourt B."/>
            <person name="Sakai H."/>
            <person name="Lee S.S."/>
            <person name="Kim J."/>
            <person name="Numa H."/>
            <person name="Itoh T."/>
            <person name="Buell C.R."/>
            <person name="Matsumoto T."/>
        </authorList>
    </citation>
    <scope>GENOME REANNOTATION</scope>
    <source>
        <strain>cv. Nipponbare</strain>
    </source>
</reference>
<reference key="4">
    <citation type="journal article" date="2005" name="PLoS Biol.">
        <title>The genomes of Oryza sativa: a history of duplications.</title>
        <authorList>
            <person name="Yu J."/>
            <person name="Wang J."/>
            <person name="Lin W."/>
            <person name="Li S."/>
            <person name="Li H."/>
            <person name="Zhou J."/>
            <person name="Ni P."/>
            <person name="Dong W."/>
            <person name="Hu S."/>
            <person name="Zeng C."/>
            <person name="Zhang J."/>
            <person name="Zhang Y."/>
            <person name="Li R."/>
            <person name="Xu Z."/>
            <person name="Li S."/>
            <person name="Li X."/>
            <person name="Zheng H."/>
            <person name="Cong L."/>
            <person name="Lin L."/>
            <person name="Yin J."/>
            <person name="Geng J."/>
            <person name="Li G."/>
            <person name="Shi J."/>
            <person name="Liu J."/>
            <person name="Lv H."/>
            <person name="Li J."/>
            <person name="Wang J."/>
            <person name="Deng Y."/>
            <person name="Ran L."/>
            <person name="Shi X."/>
            <person name="Wang X."/>
            <person name="Wu Q."/>
            <person name="Li C."/>
            <person name="Ren X."/>
            <person name="Wang J."/>
            <person name="Wang X."/>
            <person name="Li D."/>
            <person name="Liu D."/>
            <person name="Zhang X."/>
            <person name="Ji Z."/>
            <person name="Zhao W."/>
            <person name="Sun Y."/>
            <person name="Zhang Z."/>
            <person name="Bao J."/>
            <person name="Han Y."/>
            <person name="Dong L."/>
            <person name="Ji J."/>
            <person name="Chen P."/>
            <person name="Wu S."/>
            <person name="Liu J."/>
            <person name="Xiao Y."/>
            <person name="Bu D."/>
            <person name="Tan J."/>
            <person name="Yang L."/>
            <person name="Ye C."/>
            <person name="Zhang J."/>
            <person name="Xu J."/>
            <person name="Zhou Y."/>
            <person name="Yu Y."/>
            <person name="Zhang B."/>
            <person name="Zhuang S."/>
            <person name="Wei H."/>
            <person name="Liu B."/>
            <person name="Lei M."/>
            <person name="Yu H."/>
            <person name="Li Y."/>
            <person name="Xu H."/>
            <person name="Wei S."/>
            <person name="He X."/>
            <person name="Fang L."/>
            <person name="Zhang Z."/>
            <person name="Zhang Y."/>
            <person name="Huang X."/>
            <person name="Su Z."/>
            <person name="Tong W."/>
            <person name="Li J."/>
            <person name="Tong Z."/>
            <person name="Li S."/>
            <person name="Ye J."/>
            <person name="Wang L."/>
            <person name="Fang L."/>
            <person name="Lei T."/>
            <person name="Chen C.-S."/>
            <person name="Chen H.-C."/>
            <person name="Xu Z."/>
            <person name="Li H."/>
            <person name="Huang H."/>
            <person name="Zhang F."/>
            <person name="Xu H."/>
            <person name="Li N."/>
            <person name="Zhao C."/>
            <person name="Li S."/>
            <person name="Dong L."/>
            <person name="Huang Y."/>
            <person name="Li L."/>
            <person name="Xi Y."/>
            <person name="Qi Q."/>
            <person name="Li W."/>
            <person name="Zhang B."/>
            <person name="Hu W."/>
            <person name="Zhang Y."/>
            <person name="Tian X."/>
            <person name="Jiao Y."/>
            <person name="Liang X."/>
            <person name="Jin J."/>
            <person name="Gao L."/>
            <person name="Zheng W."/>
            <person name="Hao B."/>
            <person name="Liu S.-M."/>
            <person name="Wang W."/>
            <person name="Yuan L."/>
            <person name="Cao M."/>
            <person name="McDermott J."/>
            <person name="Samudrala R."/>
            <person name="Wang J."/>
            <person name="Wong G.K.-S."/>
            <person name="Yang H."/>
        </authorList>
    </citation>
    <scope>NUCLEOTIDE SEQUENCE [LARGE SCALE GENOMIC DNA]</scope>
    <source>
        <strain>cv. Nipponbare</strain>
    </source>
</reference>
<reference key="5">
    <citation type="journal article" date="2003" name="Science">
        <title>Collection, mapping, and annotation of over 28,000 cDNA clones from japonica rice.</title>
        <authorList>
            <consortium name="The rice full-length cDNA consortium"/>
        </authorList>
    </citation>
    <scope>NUCLEOTIDE SEQUENCE [LARGE SCALE MRNA]</scope>
    <source>
        <strain>cv. Nipponbare</strain>
    </source>
</reference>
<reference key="6">
    <citation type="journal article" date="2009" name="J. Integr. Plant Biol.">
        <title>Regulation of OsSPX1 and OsSPX3 on expression of OsSPX domain genes and Pi-starvation signaling in rice.</title>
        <authorList>
            <person name="Wang Z."/>
            <person name="Hu H."/>
            <person name="Huang H."/>
            <person name="Duan K."/>
            <person name="Wu Z."/>
            <person name="Wu P."/>
        </authorList>
    </citation>
    <scope>FUNCTION</scope>
    <scope>TISSUE SPECIFICITY</scope>
    <scope>INDUCTION BY PHOSPHATE</scope>
    <scope>SUBCELLULAR LOCATION</scope>
</reference>
<reference key="7">
    <citation type="journal article" date="2009" name="Plant Biotechnol. J.">
        <title>Increased expression of OsSPX1 enhances cold/subfreezing tolerance in tobacco and Arabidopsis thaliana.</title>
        <authorList>
            <person name="Zhao L."/>
            <person name="Liu F."/>
            <person name="Xu W."/>
            <person name="Di C."/>
            <person name="Zhou S."/>
            <person name="Xue Y."/>
            <person name="Yu J."/>
            <person name="Su Z."/>
        </authorList>
    </citation>
    <scope>GENE FAMILY</scope>
    <scope>NOMENCLATURE</scope>
    <scope>INDUCTION BY COLD</scope>
</reference>
<reference key="8">
    <citation type="journal article" date="2009" name="Plant J.">
        <title>Involvement of OsSPX1 in phosphate homeostasis in rice.</title>
        <authorList>
            <person name="Wang C."/>
            <person name="Ying S."/>
            <person name="Huang H."/>
            <person name="Li K."/>
            <person name="Wu P."/>
            <person name="Shou H."/>
        </authorList>
    </citation>
    <scope>FUNCTION</scope>
    <scope>INDUCTION</scope>
</reference>
<reference key="9">
    <citation type="journal article" date="2010" name="Plant J.">
        <title>OsSPX1 suppresses the function of OsPHR2 in the regulation of expression of OsPT2 and phosphate homeostasis in shoots of rice.</title>
        <authorList>
            <person name="Liu F."/>
            <person name="Wang Z."/>
            <person name="Ren H."/>
            <person name="Shen C."/>
            <person name="Li Y."/>
            <person name="Ling H.Q."/>
            <person name="Wu C."/>
            <person name="Lian X."/>
            <person name="Wu P."/>
        </authorList>
    </citation>
    <scope>FUNCTION</scope>
    <scope>INDUCTION</scope>
</reference>
<reference key="10">
    <citation type="journal article" date="2014" name="Proc. Natl. Acad. Sci. U.S.A.">
        <title>Rice SPX1 and SPX2 inhibit phosphate starvation responses through interacting with PHR2 in a phosphate-dependent manner.</title>
        <authorList>
            <person name="Wang Z."/>
            <person name="Ruan W."/>
            <person name="Shi J."/>
            <person name="Zhang L."/>
            <person name="Xiang D."/>
            <person name="Yang C."/>
            <person name="Li C."/>
            <person name="Wu Z."/>
            <person name="Liu Y."/>
            <person name="Yu Y."/>
            <person name="Shou H."/>
            <person name="Mo X."/>
            <person name="Mao C."/>
            <person name="Wu P."/>
        </authorList>
    </citation>
    <scope>FUNCTION</scope>
    <scope>INTERACTION WITH PHR2</scope>
    <scope>SUBCELLULAR LOCATION</scope>
    <scope>INDUCTION BY PHR2</scope>
    <scope>DOMAIN</scope>
</reference>
<reference key="11">
    <citation type="journal article" date="2018" name="Plant Cell">
        <title>An SPX-RLI1 module regulates leaf inclination in response to phosphate availability in rice.</title>
        <authorList>
            <person name="Ruan W."/>
            <person name="Guo M."/>
            <person name="Xu L."/>
            <person name="Wang X."/>
            <person name="Zhao H."/>
            <person name="Wang J."/>
            <person name="Yi K."/>
        </authorList>
    </citation>
    <scope>FUNCTION</scope>
    <scope>DISRUPTION PHENOTYPE</scope>
    <scope>INTERACTION WITH RLI1</scope>
    <scope>INDUCTION BY PHOSPHATE DEFICIENCY</scope>
    <scope>TISSUE SPECIFICITY</scope>
    <source>
        <strain>cv. Nipponbare</strain>
    </source>
</reference>
<reference key="12">
    <citation type="journal article" date="2022" name="Plant Cell">
        <title>Alternative splicing of REGULATOR OF LEAF INCLINATION 1 modulates phosphate starvation signaling and plant growth.</title>
        <authorList>
            <person name="Guo M."/>
            <person name="Zhang Y."/>
            <person name="Jia X."/>
            <person name="Wang X."/>
            <person name="Zhang Y."/>
            <person name="Liu J."/>
            <person name="Yang Q."/>
            <person name="Ruan W."/>
            <person name="Yi K."/>
        </authorList>
    </citation>
    <scope>INTERACTION WITH PHR2 AND RLI1</scope>
    <source>
        <strain>cv. Nipponbare</strain>
    </source>
</reference>
<name>SPX1_ORYSJ</name>
<feature type="chain" id="PRO_0000398347" description="SPX domain-containing protein 1">
    <location>
        <begin position="1"/>
        <end position="295"/>
    </location>
</feature>
<feature type="domain" description="SPX" evidence="1">
    <location>
        <begin position="1"/>
        <end position="166"/>
    </location>
</feature>
<feature type="region of interest" description="Disordered" evidence="2">
    <location>
        <begin position="199"/>
        <end position="227"/>
    </location>
</feature>
<feature type="compositionally biased region" description="Basic and acidic residues" evidence="2">
    <location>
        <begin position="204"/>
        <end position="216"/>
    </location>
</feature>
<feature type="helix" evidence="15">
    <location>
        <begin position="3"/>
        <end position="12"/>
    </location>
</feature>
<feature type="helix" evidence="15">
    <location>
        <begin position="16"/>
        <end position="18"/>
    </location>
</feature>
<feature type="turn" evidence="15">
    <location>
        <begin position="19"/>
        <end position="21"/>
    </location>
</feature>
<feature type="helix" evidence="15">
    <location>
        <begin position="25"/>
        <end position="32"/>
    </location>
</feature>
<feature type="strand" evidence="15">
    <location>
        <begin position="37"/>
        <end position="39"/>
    </location>
</feature>
<feature type="turn" evidence="15">
    <location>
        <begin position="43"/>
        <end position="46"/>
    </location>
</feature>
<feature type="strand" evidence="15">
    <location>
        <begin position="47"/>
        <end position="49"/>
    </location>
</feature>
<feature type="strand" evidence="15">
    <location>
        <begin position="51"/>
        <end position="55"/>
    </location>
</feature>
<feature type="strand" evidence="15">
    <location>
        <begin position="58"/>
        <end position="60"/>
    </location>
</feature>
<feature type="helix" evidence="15">
    <location>
        <begin position="67"/>
        <end position="108"/>
    </location>
</feature>
<feature type="helix" evidence="15">
    <location>
        <begin position="114"/>
        <end position="156"/>
    </location>
</feature>
<feature type="helix" evidence="15">
    <location>
        <begin position="161"/>
        <end position="168"/>
    </location>
</feature>
<feature type="helix" evidence="15">
    <location>
        <begin position="172"/>
        <end position="175"/>
    </location>
</feature>
<feature type="helix" evidence="15">
    <location>
        <begin position="179"/>
        <end position="193"/>
    </location>
</feature>
<keyword id="KW-0002">3D-structure</keyword>
<keyword id="KW-0539">Nucleus</keyword>
<keyword id="KW-1185">Reference proteome</keyword>
<organism>
    <name type="scientific">Oryza sativa subsp. japonica</name>
    <name type="common">Rice</name>
    <dbReference type="NCBI Taxonomy" id="39947"/>
    <lineage>
        <taxon>Eukaryota</taxon>
        <taxon>Viridiplantae</taxon>
        <taxon>Streptophyta</taxon>
        <taxon>Embryophyta</taxon>
        <taxon>Tracheophyta</taxon>
        <taxon>Spermatophyta</taxon>
        <taxon>Magnoliopsida</taxon>
        <taxon>Liliopsida</taxon>
        <taxon>Poales</taxon>
        <taxon>Poaceae</taxon>
        <taxon>BOP clade</taxon>
        <taxon>Oryzoideae</taxon>
        <taxon>Oryzeae</taxon>
        <taxon>Oryzinae</taxon>
        <taxon>Oryza</taxon>
        <taxon>Oryza sativa</taxon>
    </lineage>
</organism>
<protein>
    <recommendedName>
        <fullName evidence="10">SPX domain-containing protein 1</fullName>
    </recommendedName>
    <alternativeName>
        <fullName evidence="10">Protein SPX DOMAIN GENE 1</fullName>
        <shortName evidence="10">OsSPX1</shortName>
    </alternativeName>
</protein>